<sequence>MQNPLPEVMSPEHDKRTTTPMSKEANKFIRELDKKPGDLAVVSDFVKRNTGKRLPIGKRSNLYVRICDLSGTIYMGETFILESWEELYLPEPTKMEVLGTLESCCGIPPFPEWIVMVGEDQCVYAYGDEEILLFAYSVKQLVEEGIQETGISYKYPDDISDVDEEVLQQDEEIQKIRKKTREFVDKDAQEFQDFLNSLDASLLS</sequence>
<feature type="chain" id="PRO_0000410513" description="Uncharacterized protein 005R">
    <location>
        <begin position="1"/>
        <end position="204"/>
    </location>
</feature>
<feature type="region of interest" description="Disordered" evidence="1">
    <location>
        <begin position="1"/>
        <end position="20"/>
    </location>
</feature>
<accession>Q6GZX0</accession>
<proteinExistence type="predicted"/>
<protein>
    <recommendedName>
        <fullName>Uncharacterized protein 005R</fullName>
    </recommendedName>
</protein>
<gene>
    <name type="ORF">FV3-005R</name>
</gene>
<organism>
    <name type="scientific">Frog virus 3 (isolate Goorha)</name>
    <name type="common">FV-3</name>
    <dbReference type="NCBI Taxonomy" id="654924"/>
    <lineage>
        <taxon>Viruses</taxon>
        <taxon>Varidnaviria</taxon>
        <taxon>Bamfordvirae</taxon>
        <taxon>Nucleocytoviricota</taxon>
        <taxon>Megaviricetes</taxon>
        <taxon>Pimascovirales</taxon>
        <taxon>Iridoviridae</taxon>
        <taxon>Alphairidovirinae</taxon>
        <taxon>Ranavirus</taxon>
        <taxon>Frog virus 3</taxon>
    </lineage>
</organism>
<keyword id="KW-1185">Reference proteome</keyword>
<name>005R_FRG3G</name>
<evidence type="ECO:0000256" key="1">
    <source>
        <dbReference type="SAM" id="MobiDB-lite"/>
    </source>
</evidence>
<dbReference type="EMBL" id="AY548484">
    <property type="protein sequence ID" value="AAT09664.1"/>
    <property type="molecule type" value="Genomic_DNA"/>
</dbReference>
<dbReference type="RefSeq" id="YP_031583.1">
    <property type="nucleotide sequence ID" value="NC_005946.1"/>
</dbReference>
<dbReference type="KEGG" id="vg:2947777"/>
<dbReference type="Proteomes" id="UP000008770">
    <property type="component" value="Segment"/>
</dbReference>
<dbReference type="InterPro" id="IPR003360">
    <property type="entry name" value="US22-like"/>
</dbReference>
<dbReference type="Pfam" id="PF02393">
    <property type="entry name" value="US22"/>
    <property type="match status" value="1"/>
</dbReference>
<organismHost>
    <name type="scientific">Dryophytes versicolor</name>
    <name type="common">chameleon treefrog</name>
    <dbReference type="NCBI Taxonomy" id="30343"/>
</organismHost>
<organismHost>
    <name type="scientific">Lithobates pipiens</name>
    <name type="common">Northern leopard frog</name>
    <name type="synonym">Rana pipiens</name>
    <dbReference type="NCBI Taxonomy" id="8404"/>
</organismHost>
<organismHost>
    <name type="scientific">Lithobates sylvaticus</name>
    <name type="common">Wood frog</name>
    <name type="synonym">Rana sylvatica</name>
    <dbReference type="NCBI Taxonomy" id="45438"/>
</organismHost>
<organismHost>
    <name type="scientific">Notophthalmus viridescens</name>
    <name type="common">Eastern newt</name>
    <name type="synonym">Triturus viridescens</name>
    <dbReference type="NCBI Taxonomy" id="8316"/>
</organismHost>
<reference key="1">
    <citation type="journal article" date="2004" name="Virology">
        <title>Comparative genomic analyses of frog virus 3, type species of the genus Ranavirus (family Iridoviridae).</title>
        <authorList>
            <person name="Tan W.G."/>
            <person name="Barkman T.J."/>
            <person name="Gregory Chinchar V."/>
            <person name="Essani K."/>
        </authorList>
    </citation>
    <scope>NUCLEOTIDE SEQUENCE [LARGE SCALE GENOMIC DNA]</scope>
</reference>